<accession>B2XWQ6</accession>
<dbReference type="EMBL" id="EU254477">
    <property type="protein sequence ID" value="ABY79765.1"/>
    <property type="molecule type" value="Genomic_DNA"/>
</dbReference>
<dbReference type="RefSeq" id="YP_001936550.1">
    <property type="nucleotide sequence ID" value="NC_010776.1"/>
</dbReference>
<dbReference type="SMR" id="B2XWQ6"/>
<dbReference type="GeneID" id="6336037"/>
<dbReference type="GO" id="GO:0009507">
    <property type="term" value="C:chloroplast"/>
    <property type="evidence" value="ECO:0007669"/>
    <property type="project" value="UniProtKB-SubCell"/>
</dbReference>
<dbReference type="GO" id="GO:1990904">
    <property type="term" value="C:ribonucleoprotein complex"/>
    <property type="evidence" value="ECO:0007669"/>
    <property type="project" value="UniProtKB-KW"/>
</dbReference>
<dbReference type="GO" id="GO:0005840">
    <property type="term" value="C:ribosome"/>
    <property type="evidence" value="ECO:0007669"/>
    <property type="project" value="UniProtKB-KW"/>
</dbReference>
<dbReference type="GO" id="GO:0019843">
    <property type="term" value="F:rRNA binding"/>
    <property type="evidence" value="ECO:0007669"/>
    <property type="project" value="UniProtKB-UniRule"/>
</dbReference>
<dbReference type="GO" id="GO:0003735">
    <property type="term" value="F:structural constituent of ribosome"/>
    <property type="evidence" value="ECO:0007669"/>
    <property type="project" value="InterPro"/>
</dbReference>
<dbReference type="GO" id="GO:0006412">
    <property type="term" value="P:translation"/>
    <property type="evidence" value="ECO:0007669"/>
    <property type="project" value="UniProtKB-UniRule"/>
</dbReference>
<dbReference type="FunFam" id="3.30.420.80:FF:000003">
    <property type="entry name" value="30S ribosomal protein S11, chloroplastic"/>
    <property type="match status" value="1"/>
</dbReference>
<dbReference type="Gene3D" id="3.30.420.80">
    <property type="entry name" value="Ribosomal protein S11"/>
    <property type="match status" value="1"/>
</dbReference>
<dbReference type="HAMAP" id="MF_01310">
    <property type="entry name" value="Ribosomal_uS11"/>
    <property type="match status" value="1"/>
</dbReference>
<dbReference type="InterPro" id="IPR001971">
    <property type="entry name" value="Ribosomal_uS11"/>
</dbReference>
<dbReference type="InterPro" id="IPR019981">
    <property type="entry name" value="Ribosomal_uS11_bac-type"/>
</dbReference>
<dbReference type="InterPro" id="IPR018102">
    <property type="entry name" value="Ribosomal_uS11_CS"/>
</dbReference>
<dbReference type="InterPro" id="IPR036967">
    <property type="entry name" value="Ribosomal_uS11_sf"/>
</dbReference>
<dbReference type="NCBIfam" id="NF003698">
    <property type="entry name" value="PRK05309.1"/>
    <property type="match status" value="1"/>
</dbReference>
<dbReference type="NCBIfam" id="TIGR03632">
    <property type="entry name" value="uS11_bact"/>
    <property type="match status" value="1"/>
</dbReference>
<dbReference type="PANTHER" id="PTHR11759">
    <property type="entry name" value="40S RIBOSOMAL PROTEIN S14/30S RIBOSOMAL PROTEIN S11"/>
    <property type="match status" value="1"/>
</dbReference>
<dbReference type="Pfam" id="PF00411">
    <property type="entry name" value="Ribosomal_S11"/>
    <property type="match status" value="1"/>
</dbReference>
<dbReference type="PIRSF" id="PIRSF002131">
    <property type="entry name" value="Ribosomal_S11"/>
    <property type="match status" value="1"/>
</dbReference>
<dbReference type="SUPFAM" id="SSF53137">
    <property type="entry name" value="Translational machinery components"/>
    <property type="match status" value="1"/>
</dbReference>
<dbReference type="PROSITE" id="PS00054">
    <property type="entry name" value="RIBOSOMAL_S11"/>
    <property type="match status" value="1"/>
</dbReference>
<organism>
    <name type="scientific">Fagopyrum esculentum subsp. ancestrale</name>
    <name type="common">Wild buckwheat</name>
    <dbReference type="NCBI Taxonomy" id="180217"/>
    <lineage>
        <taxon>Eukaryota</taxon>
        <taxon>Viridiplantae</taxon>
        <taxon>Streptophyta</taxon>
        <taxon>Embryophyta</taxon>
        <taxon>Tracheophyta</taxon>
        <taxon>Spermatophyta</taxon>
        <taxon>Magnoliopsida</taxon>
        <taxon>eudicotyledons</taxon>
        <taxon>Gunneridae</taxon>
        <taxon>Pentapetalae</taxon>
        <taxon>Caryophyllales</taxon>
        <taxon>Polygonaceae</taxon>
        <taxon>Polygonoideae</taxon>
        <taxon>Fagopyreae</taxon>
        <taxon>Fagopyrum</taxon>
    </lineage>
</organism>
<protein>
    <recommendedName>
        <fullName evidence="1">Small ribosomal subunit protein uS11c</fullName>
    </recommendedName>
    <alternativeName>
        <fullName evidence="3">30S ribosomal protein S11, chloroplastic</fullName>
    </alternativeName>
</protein>
<comment type="subunit">
    <text evidence="1">Part of the 30S ribosomal subunit.</text>
</comment>
<comment type="subcellular location">
    <subcellularLocation>
        <location>Plastid</location>
        <location>Chloroplast</location>
    </subcellularLocation>
</comment>
<comment type="similarity">
    <text evidence="1">Belongs to the universal ribosomal protein uS11 family.</text>
</comment>
<sequence length="138" mass="15020">MAKPIPRIGSQRNRRINSRKNARKMPKGVIYVQAGFNNTIVTVTDVRGRVVSWASAGTCGFKGAKRGTPFAAQTAAGNAIRKVVDQGMQRAEVMIKGPGLGRDAALRAIRRSGILLSFVRDVTPMPHNGCRPPKKRRV</sequence>
<evidence type="ECO:0000255" key="1">
    <source>
        <dbReference type="HAMAP-Rule" id="MF_01310"/>
    </source>
</evidence>
<evidence type="ECO:0000256" key="2">
    <source>
        <dbReference type="SAM" id="MobiDB-lite"/>
    </source>
</evidence>
<evidence type="ECO:0000305" key="3"/>
<feature type="chain" id="PRO_0000364213" description="Small ribosomal subunit protein uS11c">
    <location>
        <begin position="1"/>
        <end position="138"/>
    </location>
</feature>
<feature type="region of interest" description="Disordered" evidence="2">
    <location>
        <begin position="1"/>
        <end position="22"/>
    </location>
</feature>
<feature type="compositionally biased region" description="Basic residues" evidence="2">
    <location>
        <begin position="12"/>
        <end position="22"/>
    </location>
</feature>
<name>RR11_FAGEA</name>
<keyword id="KW-0150">Chloroplast</keyword>
<keyword id="KW-0934">Plastid</keyword>
<keyword id="KW-0687">Ribonucleoprotein</keyword>
<keyword id="KW-0689">Ribosomal protein</keyword>
<keyword id="KW-0694">RNA-binding</keyword>
<keyword id="KW-0699">rRNA-binding</keyword>
<geneLocation type="chloroplast"/>
<proteinExistence type="inferred from homology"/>
<gene>
    <name evidence="1" type="primary">rps11</name>
</gene>
<reference key="1">
    <citation type="journal article" date="2008" name="BMC Plant Biol.">
        <title>Comparative chloroplast genomics and phylogenetics of Fagopyrum esculentum ssp. ancestrale - a wild ancestor of cultivated buckwheat.</title>
        <authorList>
            <person name="Logacheva M.D."/>
            <person name="Samigullin T.H."/>
            <person name="Dhingra A."/>
            <person name="Penin A.A."/>
        </authorList>
    </citation>
    <scope>NUCLEOTIDE SEQUENCE [LARGE SCALE GENOMIC DNA]</scope>
</reference>